<protein>
    <recommendedName>
        <fullName evidence="1">Ribosome maturation factor RimP</fullName>
    </recommendedName>
</protein>
<feature type="chain" id="PRO_0000384648" description="Ribosome maturation factor RimP">
    <location>
        <begin position="1"/>
        <end position="152"/>
    </location>
</feature>
<name>RIMP_ERWT9</name>
<sequence length="152" mass="16815">MGLSTLEQKLTELISAPVEALGYELVGIEFVRGRTSTLRIYIDSEDGINVDDCADVSHQVSAVMDVEDPITVAYNLEVSSPGLDRPMFTAEHYARFTGEEVSLVLRMAVQNRRKWQGIIKSVEGEMITVAVEGNDEVFALSNIQKANLVPHF</sequence>
<gene>
    <name evidence="1" type="primary">rimP</name>
    <name type="ordered locus">ETA_03450</name>
</gene>
<keyword id="KW-0963">Cytoplasm</keyword>
<keyword id="KW-1185">Reference proteome</keyword>
<keyword id="KW-0690">Ribosome biogenesis</keyword>
<evidence type="ECO:0000255" key="1">
    <source>
        <dbReference type="HAMAP-Rule" id="MF_01077"/>
    </source>
</evidence>
<evidence type="ECO:0000305" key="2"/>
<organism>
    <name type="scientific">Erwinia tasmaniensis (strain DSM 17950 / CFBP 7177 / CIP 109463 / NCPPB 4357 / Et1/99)</name>
    <dbReference type="NCBI Taxonomy" id="465817"/>
    <lineage>
        <taxon>Bacteria</taxon>
        <taxon>Pseudomonadati</taxon>
        <taxon>Pseudomonadota</taxon>
        <taxon>Gammaproteobacteria</taxon>
        <taxon>Enterobacterales</taxon>
        <taxon>Erwiniaceae</taxon>
        <taxon>Erwinia</taxon>
    </lineage>
</organism>
<reference key="1">
    <citation type="journal article" date="2008" name="Environ. Microbiol.">
        <title>The genome of Erwinia tasmaniensis strain Et1/99, a non-pathogenic bacterium in the genus Erwinia.</title>
        <authorList>
            <person name="Kube M."/>
            <person name="Migdoll A.M."/>
            <person name="Mueller I."/>
            <person name="Kuhl H."/>
            <person name="Beck A."/>
            <person name="Reinhardt R."/>
            <person name="Geider K."/>
        </authorList>
    </citation>
    <scope>NUCLEOTIDE SEQUENCE [LARGE SCALE GENOMIC DNA]</scope>
    <source>
        <strain>DSM 17950 / CFBP 7177 / CIP 109463 / NCPPB 4357 / Et1/99</strain>
    </source>
</reference>
<proteinExistence type="inferred from homology"/>
<comment type="function">
    <text evidence="1">Required for maturation of 30S ribosomal subunits.</text>
</comment>
<comment type="subcellular location">
    <subcellularLocation>
        <location evidence="1">Cytoplasm</location>
    </subcellularLocation>
</comment>
<comment type="similarity">
    <text evidence="1">Belongs to the RimP family.</text>
</comment>
<comment type="sequence caution" evidence="2">
    <conflict type="erroneous initiation">
        <sequence resource="EMBL-CDS" id="CAO95391"/>
    </conflict>
</comment>
<dbReference type="EMBL" id="CU468135">
    <property type="protein sequence ID" value="CAO95391.1"/>
    <property type="status" value="ALT_INIT"/>
    <property type="molecule type" value="Genomic_DNA"/>
</dbReference>
<dbReference type="SMR" id="B2VGS4"/>
<dbReference type="STRING" id="465817.ETA_03450"/>
<dbReference type="KEGG" id="eta:ETA_03450"/>
<dbReference type="eggNOG" id="COG0779">
    <property type="taxonomic scope" value="Bacteria"/>
</dbReference>
<dbReference type="HOGENOM" id="CLU_070525_1_1_6"/>
<dbReference type="Proteomes" id="UP000001726">
    <property type="component" value="Chromosome"/>
</dbReference>
<dbReference type="GO" id="GO:0005829">
    <property type="term" value="C:cytosol"/>
    <property type="evidence" value="ECO:0007669"/>
    <property type="project" value="TreeGrafter"/>
</dbReference>
<dbReference type="GO" id="GO:0000028">
    <property type="term" value="P:ribosomal small subunit assembly"/>
    <property type="evidence" value="ECO:0007669"/>
    <property type="project" value="TreeGrafter"/>
</dbReference>
<dbReference type="GO" id="GO:0006412">
    <property type="term" value="P:translation"/>
    <property type="evidence" value="ECO:0007669"/>
    <property type="project" value="TreeGrafter"/>
</dbReference>
<dbReference type="CDD" id="cd01734">
    <property type="entry name" value="YlxS_C"/>
    <property type="match status" value="1"/>
</dbReference>
<dbReference type="FunFam" id="2.30.30.180:FF:000001">
    <property type="entry name" value="Ribosome maturation factor RimP"/>
    <property type="match status" value="1"/>
</dbReference>
<dbReference type="FunFam" id="3.30.300.70:FF:000001">
    <property type="entry name" value="Ribosome maturation factor RimP"/>
    <property type="match status" value="1"/>
</dbReference>
<dbReference type="Gene3D" id="2.30.30.180">
    <property type="entry name" value="Ribosome maturation factor RimP, C-terminal domain"/>
    <property type="match status" value="1"/>
</dbReference>
<dbReference type="Gene3D" id="3.30.300.70">
    <property type="entry name" value="RimP-like superfamily, N-terminal"/>
    <property type="match status" value="1"/>
</dbReference>
<dbReference type="HAMAP" id="MF_01077">
    <property type="entry name" value="RimP"/>
    <property type="match status" value="1"/>
</dbReference>
<dbReference type="InterPro" id="IPR003728">
    <property type="entry name" value="Ribosome_maturation_RimP"/>
</dbReference>
<dbReference type="InterPro" id="IPR028998">
    <property type="entry name" value="RimP_C"/>
</dbReference>
<dbReference type="InterPro" id="IPR036847">
    <property type="entry name" value="RimP_C_sf"/>
</dbReference>
<dbReference type="InterPro" id="IPR028989">
    <property type="entry name" value="RimP_N"/>
</dbReference>
<dbReference type="InterPro" id="IPR035956">
    <property type="entry name" value="RimP_N_sf"/>
</dbReference>
<dbReference type="NCBIfam" id="NF000927">
    <property type="entry name" value="PRK00092.1-1"/>
    <property type="match status" value="1"/>
</dbReference>
<dbReference type="PANTHER" id="PTHR33867">
    <property type="entry name" value="RIBOSOME MATURATION FACTOR RIMP"/>
    <property type="match status" value="1"/>
</dbReference>
<dbReference type="PANTHER" id="PTHR33867:SF1">
    <property type="entry name" value="RIBOSOME MATURATION FACTOR RIMP"/>
    <property type="match status" value="1"/>
</dbReference>
<dbReference type="Pfam" id="PF17384">
    <property type="entry name" value="DUF150_C"/>
    <property type="match status" value="1"/>
</dbReference>
<dbReference type="Pfam" id="PF02576">
    <property type="entry name" value="RimP_N"/>
    <property type="match status" value="1"/>
</dbReference>
<dbReference type="SUPFAM" id="SSF74942">
    <property type="entry name" value="YhbC-like, C-terminal domain"/>
    <property type="match status" value="1"/>
</dbReference>
<dbReference type="SUPFAM" id="SSF75420">
    <property type="entry name" value="YhbC-like, N-terminal domain"/>
    <property type="match status" value="1"/>
</dbReference>
<accession>B2VGS4</accession>